<feature type="chain" id="PRO_0000134310" description="Small ribosomal subunit protein uS2c">
    <location>
        <begin position="1"/>
        <end position="234"/>
    </location>
</feature>
<name>RR2_PINTH</name>
<comment type="subcellular location">
    <subcellularLocation>
        <location>Plastid</location>
        <location>Chloroplast</location>
    </subcellularLocation>
</comment>
<comment type="similarity">
    <text evidence="1">Belongs to the universal ribosomal protein uS2 family.</text>
</comment>
<keyword id="KW-0150">Chloroplast</keyword>
<keyword id="KW-0934">Plastid</keyword>
<keyword id="KW-0687">Ribonucleoprotein</keyword>
<keyword id="KW-0689">Ribosomal protein</keyword>
<gene>
    <name type="primary">rps2</name>
</gene>
<reference key="1">
    <citation type="journal article" date="1994" name="Proc. Natl. Acad. Sci. U.S.A.">
        <title>Loss of all ndh genes as determined by sequencing the entire chloroplast genome of the black pine Pinus thunbergii.</title>
        <authorList>
            <person name="Wakasugi T."/>
            <person name="Tsudzuki J."/>
            <person name="Ito S."/>
            <person name="Nakashima K."/>
            <person name="Tsudzuki T."/>
            <person name="Sugiura M."/>
        </authorList>
    </citation>
    <scope>NUCLEOTIDE SEQUENCE [LARGE SCALE GENOMIC DNA]</scope>
</reference>
<organism>
    <name type="scientific">Pinus thunbergii</name>
    <name type="common">Japanese black pine</name>
    <name type="synonym">Pinus thunbergiana</name>
    <dbReference type="NCBI Taxonomy" id="3350"/>
    <lineage>
        <taxon>Eukaryota</taxon>
        <taxon>Viridiplantae</taxon>
        <taxon>Streptophyta</taxon>
        <taxon>Embryophyta</taxon>
        <taxon>Tracheophyta</taxon>
        <taxon>Spermatophyta</taxon>
        <taxon>Pinopsida</taxon>
        <taxon>Pinidae</taxon>
        <taxon>Conifers I</taxon>
        <taxon>Pinales</taxon>
        <taxon>Pinaceae</taxon>
        <taxon>Pinus</taxon>
        <taxon>Pinus subgen. Pinus</taxon>
    </lineage>
</organism>
<geneLocation type="chloroplast"/>
<evidence type="ECO:0000305" key="1"/>
<sequence length="234" mass="26614">MSRRYWNIDLEEMMEARVHLGHKTRKWNPKMAPYIFTERKDTHIINLAKTARSLSEACDLLFDIAGRGKQFLIVGTKYQATDLVASAATEARCHYVNRKWLGGMLTNWSTTETRLQKFKDLKKEQDTGRFNQLPKKEAAMLKRQLDQLQKYLGGIRYMTSLPDIAIITNQREESIALGECRTLGIPTICLVDTDCDPDLVDIPIPANDDGIASIQLILNRLTSAICEGRALRSL</sequence>
<accession>P41605</accession>
<dbReference type="EMBL" id="D17510">
    <property type="protein sequence ID" value="BAA04324.1"/>
    <property type="molecule type" value="Genomic_DNA"/>
</dbReference>
<dbReference type="PIR" id="T07445">
    <property type="entry name" value="T07445"/>
</dbReference>
<dbReference type="RefSeq" id="NP_042366.1">
    <property type="nucleotide sequence ID" value="NC_001631.1"/>
</dbReference>
<dbReference type="SMR" id="P41605"/>
<dbReference type="GeneID" id="809081"/>
<dbReference type="GO" id="GO:0009507">
    <property type="term" value="C:chloroplast"/>
    <property type="evidence" value="ECO:0007669"/>
    <property type="project" value="UniProtKB-SubCell"/>
</dbReference>
<dbReference type="GO" id="GO:0005763">
    <property type="term" value="C:mitochondrial small ribosomal subunit"/>
    <property type="evidence" value="ECO:0007669"/>
    <property type="project" value="TreeGrafter"/>
</dbReference>
<dbReference type="GO" id="GO:0003735">
    <property type="term" value="F:structural constituent of ribosome"/>
    <property type="evidence" value="ECO:0007669"/>
    <property type="project" value="InterPro"/>
</dbReference>
<dbReference type="GO" id="GO:0006412">
    <property type="term" value="P:translation"/>
    <property type="evidence" value="ECO:0007669"/>
    <property type="project" value="UniProtKB-UniRule"/>
</dbReference>
<dbReference type="CDD" id="cd01425">
    <property type="entry name" value="RPS2"/>
    <property type="match status" value="1"/>
</dbReference>
<dbReference type="FunFam" id="1.10.287.610:FF:000001">
    <property type="entry name" value="30S ribosomal protein S2"/>
    <property type="match status" value="1"/>
</dbReference>
<dbReference type="Gene3D" id="3.40.50.10490">
    <property type="entry name" value="Glucose-6-phosphate isomerase like protein, domain 1"/>
    <property type="match status" value="1"/>
</dbReference>
<dbReference type="Gene3D" id="1.10.287.610">
    <property type="entry name" value="Helix hairpin bin"/>
    <property type="match status" value="1"/>
</dbReference>
<dbReference type="HAMAP" id="MF_00291_B">
    <property type="entry name" value="Ribosomal_uS2_B"/>
    <property type="match status" value="1"/>
</dbReference>
<dbReference type="InterPro" id="IPR001865">
    <property type="entry name" value="Ribosomal_uS2"/>
</dbReference>
<dbReference type="InterPro" id="IPR005706">
    <property type="entry name" value="Ribosomal_uS2_bac/mit/plastid"/>
</dbReference>
<dbReference type="InterPro" id="IPR018130">
    <property type="entry name" value="Ribosomal_uS2_CS"/>
</dbReference>
<dbReference type="InterPro" id="IPR023591">
    <property type="entry name" value="Ribosomal_uS2_flav_dom_sf"/>
</dbReference>
<dbReference type="NCBIfam" id="TIGR01011">
    <property type="entry name" value="rpsB_bact"/>
    <property type="match status" value="1"/>
</dbReference>
<dbReference type="PANTHER" id="PTHR12534">
    <property type="entry name" value="30S RIBOSOMAL PROTEIN S2 PROKARYOTIC AND ORGANELLAR"/>
    <property type="match status" value="1"/>
</dbReference>
<dbReference type="PANTHER" id="PTHR12534:SF0">
    <property type="entry name" value="SMALL RIBOSOMAL SUBUNIT PROTEIN US2M"/>
    <property type="match status" value="1"/>
</dbReference>
<dbReference type="Pfam" id="PF00318">
    <property type="entry name" value="Ribosomal_S2"/>
    <property type="match status" value="1"/>
</dbReference>
<dbReference type="PRINTS" id="PR00395">
    <property type="entry name" value="RIBOSOMALS2"/>
</dbReference>
<dbReference type="SUPFAM" id="SSF52313">
    <property type="entry name" value="Ribosomal protein S2"/>
    <property type="match status" value="1"/>
</dbReference>
<dbReference type="PROSITE" id="PS00962">
    <property type="entry name" value="RIBOSOMAL_S2_1"/>
    <property type="match status" value="1"/>
</dbReference>
<protein>
    <recommendedName>
        <fullName evidence="1">Small ribosomal subunit protein uS2c</fullName>
    </recommendedName>
    <alternativeName>
        <fullName>30S ribosomal protein S2, chloroplastic</fullName>
    </alternativeName>
</protein>
<proteinExistence type="inferred from homology"/>